<name>PANB_LEGPC</name>
<accession>A5IAR5</accession>
<dbReference type="EC" id="2.1.2.11" evidence="1"/>
<dbReference type="EMBL" id="CP000675">
    <property type="protein sequence ID" value="ABQ54465.1"/>
    <property type="molecule type" value="Genomic_DNA"/>
</dbReference>
<dbReference type="RefSeq" id="WP_011947574.1">
    <property type="nucleotide sequence ID" value="NC_009494.2"/>
</dbReference>
<dbReference type="SMR" id="A5IAR5"/>
<dbReference type="KEGG" id="lpc:LPC_0478"/>
<dbReference type="HOGENOM" id="CLU_036645_1_0_6"/>
<dbReference type="UniPathway" id="UPA00028">
    <property type="reaction ID" value="UER00003"/>
</dbReference>
<dbReference type="GO" id="GO:0005737">
    <property type="term" value="C:cytoplasm"/>
    <property type="evidence" value="ECO:0007669"/>
    <property type="project" value="UniProtKB-SubCell"/>
</dbReference>
<dbReference type="GO" id="GO:0003864">
    <property type="term" value="F:3-methyl-2-oxobutanoate hydroxymethyltransferase activity"/>
    <property type="evidence" value="ECO:0007669"/>
    <property type="project" value="UniProtKB-UniRule"/>
</dbReference>
<dbReference type="GO" id="GO:0000287">
    <property type="term" value="F:magnesium ion binding"/>
    <property type="evidence" value="ECO:0007669"/>
    <property type="project" value="TreeGrafter"/>
</dbReference>
<dbReference type="GO" id="GO:0015940">
    <property type="term" value="P:pantothenate biosynthetic process"/>
    <property type="evidence" value="ECO:0007669"/>
    <property type="project" value="UniProtKB-UniRule"/>
</dbReference>
<dbReference type="CDD" id="cd06557">
    <property type="entry name" value="KPHMT-like"/>
    <property type="match status" value="1"/>
</dbReference>
<dbReference type="FunFam" id="3.20.20.60:FF:000003">
    <property type="entry name" value="3-methyl-2-oxobutanoate hydroxymethyltransferase"/>
    <property type="match status" value="1"/>
</dbReference>
<dbReference type="Gene3D" id="3.20.20.60">
    <property type="entry name" value="Phosphoenolpyruvate-binding domains"/>
    <property type="match status" value="1"/>
</dbReference>
<dbReference type="HAMAP" id="MF_00156">
    <property type="entry name" value="PanB"/>
    <property type="match status" value="1"/>
</dbReference>
<dbReference type="InterPro" id="IPR003700">
    <property type="entry name" value="Pantoate_hydroxy_MeTrfase"/>
</dbReference>
<dbReference type="InterPro" id="IPR015813">
    <property type="entry name" value="Pyrv/PenolPyrv_kinase-like_dom"/>
</dbReference>
<dbReference type="InterPro" id="IPR040442">
    <property type="entry name" value="Pyrv_kinase-like_dom_sf"/>
</dbReference>
<dbReference type="NCBIfam" id="TIGR00222">
    <property type="entry name" value="panB"/>
    <property type="match status" value="1"/>
</dbReference>
<dbReference type="NCBIfam" id="NF001452">
    <property type="entry name" value="PRK00311.1"/>
    <property type="match status" value="1"/>
</dbReference>
<dbReference type="PANTHER" id="PTHR20881">
    <property type="entry name" value="3-METHYL-2-OXOBUTANOATE HYDROXYMETHYLTRANSFERASE"/>
    <property type="match status" value="1"/>
</dbReference>
<dbReference type="PANTHER" id="PTHR20881:SF0">
    <property type="entry name" value="3-METHYL-2-OXOBUTANOATE HYDROXYMETHYLTRANSFERASE"/>
    <property type="match status" value="1"/>
</dbReference>
<dbReference type="Pfam" id="PF02548">
    <property type="entry name" value="Pantoate_transf"/>
    <property type="match status" value="1"/>
</dbReference>
<dbReference type="PIRSF" id="PIRSF000388">
    <property type="entry name" value="Pantoate_hydroxy_MeTrfase"/>
    <property type="match status" value="1"/>
</dbReference>
<dbReference type="SUPFAM" id="SSF51621">
    <property type="entry name" value="Phosphoenolpyruvate/pyruvate domain"/>
    <property type="match status" value="1"/>
</dbReference>
<reference key="1">
    <citation type="submission" date="2006-11" db="EMBL/GenBank/DDBJ databases">
        <title>Identification and characterization of a new conjugation/ type IVA secretion system (trb/tra) of L. pneumophila Corby localized on a mobile genomic island.</title>
        <authorList>
            <person name="Gloeckner G."/>
            <person name="Albert-Weissenberger C."/>
            <person name="Weinmann E."/>
            <person name="Jacobi S."/>
            <person name="Schunder E."/>
            <person name="Steinert M."/>
            <person name="Buchrieser C."/>
            <person name="Hacker J."/>
            <person name="Heuner K."/>
        </authorList>
    </citation>
    <scope>NUCLEOTIDE SEQUENCE [LARGE SCALE GENOMIC DNA]</scope>
    <source>
        <strain>Corby</strain>
    </source>
</reference>
<feature type="chain" id="PRO_1000011373" description="3-methyl-2-oxobutanoate hydroxymethyltransferase">
    <location>
        <begin position="1"/>
        <end position="262"/>
    </location>
</feature>
<feature type="active site" description="Proton acceptor" evidence="1">
    <location>
        <position position="180"/>
    </location>
</feature>
<feature type="binding site" evidence="1">
    <location>
        <begin position="42"/>
        <end position="43"/>
    </location>
    <ligand>
        <name>3-methyl-2-oxobutanoate</name>
        <dbReference type="ChEBI" id="CHEBI:11851"/>
    </ligand>
</feature>
<feature type="binding site" evidence="1">
    <location>
        <position position="42"/>
    </location>
    <ligand>
        <name>Mg(2+)</name>
        <dbReference type="ChEBI" id="CHEBI:18420"/>
    </ligand>
</feature>
<feature type="binding site" evidence="1">
    <location>
        <position position="81"/>
    </location>
    <ligand>
        <name>3-methyl-2-oxobutanoate</name>
        <dbReference type="ChEBI" id="CHEBI:11851"/>
    </ligand>
</feature>
<feature type="binding site" evidence="1">
    <location>
        <position position="81"/>
    </location>
    <ligand>
        <name>Mg(2+)</name>
        <dbReference type="ChEBI" id="CHEBI:18420"/>
    </ligand>
</feature>
<feature type="binding site" evidence="1">
    <location>
        <position position="110"/>
    </location>
    <ligand>
        <name>3-methyl-2-oxobutanoate</name>
        <dbReference type="ChEBI" id="CHEBI:11851"/>
    </ligand>
</feature>
<feature type="binding site" evidence="1">
    <location>
        <position position="112"/>
    </location>
    <ligand>
        <name>Mg(2+)</name>
        <dbReference type="ChEBI" id="CHEBI:18420"/>
    </ligand>
</feature>
<comment type="function">
    <text evidence="1">Catalyzes the reversible reaction in which hydroxymethyl group from 5,10-methylenetetrahydrofolate is transferred onto alpha-ketoisovalerate to form ketopantoate.</text>
</comment>
<comment type="catalytic activity">
    <reaction evidence="1">
        <text>3-methyl-2-oxobutanoate + (6R)-5,10-methylene-5,6,7,8-tetrahydrofolate + H2O = 2-dehydropantoate + (6S)-5,6,7,8-tetrahydrofolate</text>
        <dbReference type="Rhea" id="RHEA:11824"/>
        <dbReference type="ChEBI" id="CHEBI:11561"/>
        <dbReference type="ChEBI" id="CHEBI:11851"/>
        <dbReference type="ChEBI" id="CHEBI:15377"/>
        <dbReference type="ChEBI" id="CHEBI:15636"/>
        <dbReference type="ChEBI" id="CHEBI:57453"/>
        <dbReference type="EC" id="2.1.2.11"/>
    </reaction>
</comment>
<comment type="cofactor">
    <cofactor evidence="1">
        <name>Mg(2+)</name>
        <dbReference type="ChEBI" id="CHEBI:18420"/>
    </cofactor>
    <text evidence="1">Binds 1 Mg(2+) ion per subunit.</text>
</comment>
<comment type="pathway">
    <text evidence="1">Cofactor biosynthesis; (R)-pantothenate biosynthesis; (R)-pantoate from 3-methyl-2-oxobutanoate: step 1/2.</text>
</comment>
<comment type="subunit">
    <text evidence="1">Homodecamer; pentamer of dimers.</text>
</comment>
<comment type="subcellular location">
    <subcellularLocation>
        <location evidence="1">Cytoplasm</location>
    </subcellularLocation>
</comment>
<comment type="similarity">
    <text evidence="1">Belongs to the PanB family.</text>
</comment>
<organism>
    <name type="scientific">Legionella pneumophila (strain Corby)</name>
    <dbReference type="NCBI Taxonomy" id="400673"/>
    <lineage>
        <taxon>Bacteria</taxon>
        <taxon>Pseudomonadati</taxon>
        <taxon>Pseudomonadota</taxon>
        <taxon>Gammaproteobacteria</taxon>
        <taxon>Legionellales</taxon>
        <taxon>Legionellaceae</taxon>
        <taxon>Legionella</taxon>
    </lineage>
</organism>
<sequence>MKIHDFKNKKQEQKKISMLTCYDYPSACIIANSNIHCVLVGDSVAMAVHGHPTTIMATIEMMELHTQAVARGLGKQFLITDLPFLGHKSSQGHTVENVKRLLQAGAQAVKIEGADKDTCQTISHLVNAGIPVMGHIGLTPQSIHQLGGYKVQGKNSEQAETLLQQADALEQAGCFAVVIECVPQGLAKTITDSLVIPTIGIGAGPGTDGQVLVWHDMLGLQTSFNPKFVKKYFRAKDHFIEALNSYVQQVQQMHFPANEHSF</sequence>
<protein>
    <recommendedName>
        <fullName evidence="1">3-methyl-2-oxobutanoate hydroxymethyltransferase</fullName>
        <ecNumber evidence="1">2.1.2.11</ecNumber>
    </recommendedName>
    <alternativeName>
        <fullName evidence="1">Ketopantoate hydroxymethyltransferase</fullName>
        <shortName evidence="1">KPHMT</shortName>
    </alternativeName>
</protein>
<evidence type="ECO:0000255" key="1">
    <source>
        <dbReference type="HAMAP-Rule" id="MF_00156"/>
    </source>
</evidence>
<keyword id="KW-0963">Cytoplasm</keyword>
<keyword id="KW-0460">Magnesium</keyword>
<keyword id="KW-0479">Metal-binding</keyword>
<keyword id="KW-0566">Pantothenate biosynthesis</keyword>
<keyword id="KW-0808">Transferase</keyword>
<proteinExistence type="inferred from homology"/>
<gene>
    <name evidence="1" type="primary">panB</name>
    <name type="ordered locus">LPC_0478</name>
</gene>